<dbReference type="EMBL" id="AP003802">
    <property type="protein sequence ID" value="BAC15860.1"/>
    <property type="molecule type" value="Genomic_DNA"/>
</dbReference>
<dbReference type="EMBL" id="AP004668">
    <property type="protein sequence ID" value="BAC16113.1"/>
    <property type="molecule type" value="Genomic_DNA"/>
</dbReference>
<dbReference type="EMBL" id="AP008213">
    <property type="protein sequence ID" value="BAF21456.1"/>
    <property type="molecule type" value="Genomic_DNA"/>
</dbReference>
<dbReference type="EMBL" id="AP014963">
    <property type="protein sequence ID" value="BAT01301.1"/>
    <property type="molecule type" value="Genomic_DNA"/>
</dbReference>
<dbReference type="EMBL" id="AK072632">
    <property type="protein sequence ID" value="BAG93070.1"/>
    <property type="molecule type" value="mRNA"/>
</dbReference>
<dbReference type="RefSeq" id="XP_015644586.1">
    <property type="nucleotide sequence ID" value="XM_015789100.1"/>
</dbReference>
<dbReference type="SMR" id="Q8GRT8"/>
<dbReference type="FunCoup" id="Q8GRT8">
    <property type="interactions" value="282"/>
</dbReference>
<dbReference type="STRING" id="39947.Q8GRT8"/>
<dbReference type="PaxDb" id="39947-Q8GRT8"/>
<dbReference type="EnsemblPlants" id="Os07t0448100-01">
    <property type="protein sequence ID" value="Os07t0448100-01"/>
    <property type="gene ID" value="Os07g0448100"/>
</dbReference>
<dbReference type="Gramene" id="Os07t0448100-01">
    <property type="protein sequence ID" value="Os07t0448100-01"/>
    <property type="gene ID" value="Os07g0448100"/>
</dbReference>
<dbReference type="KEGG" id="dosa:Os07g0448100"/>
<dbReference type="eggNOG" id="KOG0223">
    <property type="taxonomic scope" value="Eukaryota"/>
</dbReference>
<dbReference type="HOGENOM" id="CLU_020019_3_0_1"/>
<dbReference type="InParanoid" id="Q8GRT8"/>
<dbReference type="OMA" id="ATPNWIC"/>
<dbReference type="OrthoDB" id="608171at2759"/>
<dbReference type="PlantReactome" id="R-OSA-9618218">
    <property type="pathway name" value="Arsenic uptake and detoxification"/>
</dbReference>
<dbReference type="Proteomes" id="UP000000763">
    <property type="component" value="Chromosome 7"/>
</dbReference>
<dbReference type="Proteomes" id="UP000059680">
    <property type="component" value="Chromosome 7"/>
</dbReference>
<dbReference type="GO" id="GO:0005886">
    <property type="term" value="C:plasma membrane"/>
    <property type="evidence" value="ECO:0000318"/>
    <property type="project" value="GO_Central"/>
</dbReference>
<dbReference type="GO" id="GO:0015250">
    <property type="term" value="F:water channel activity"/>
    <property type="evidence" value="ECO:0000318"/>
    <property type="project" value="GO_Central"/>
</dbReference>
<dbReference type="CDD" id="cd00333">
    <property type="entry name" value="MIP"/>
    <property type="match status" value="1"/>
</dbReference>
<dbReference type="FunFam" id="1.20.1080.10:FF:000001">
    <property type="entry name" value="Probable aquaporin PIP1-2"/>
    <property type="match status" value="1"/>
</dbReference>
<dbReference type="Gene3D" id="1.20.1080.10">
    <property type="entry name" value="Glycerol uptake facilitator protein"/>
    <property type="match status" value="1"/>
</dbReference>
<dbReference type="InterPro" id="IPR023271">
    <property type="entry name" value="Aquaporin-like"/>
</dbReference>
<dbReference type="InterPro" id="IPR034294">
    <property type="entry name" value="Aquaporin_transptr"/>
</dbReference>
<dbReference type="InterPro" id="IPR000425">
    <property type="entry name" value="MIP"/>
</dbReference>
<dbReference type="InterPro" id="IPR022357">
    <property type="entry name" value="MIP_CS"/>
</dbReference>
<dbReference type="NCBIfam" id="TIGR00861">
    <property type="entry name" value="MIP"/>
    <property type="match status" value="1"/>
</dbReference>
<dbReference type="PANTHER" id="PTHR45687">
    <property type="entry name" value="AQUAPORIN OR AQUAGLYCEROPORIN RELATED"/>
    <property type="match status" value="1"/>
</dbReference>
<dbReference type="Pfam" id="PF00230">
    <property type="entry name" value="MIP"/>
    <property type="match status" value="1"/>
</dbReference>
<dbReference type="PRINTS" id="PR00783">
    <property type="entry name" value="MINTRINSICP"/>
</dbReference>
<dbReference type="SUPFAM" id="SSF81338">
    <property type="entry name" value="Aquaporin-like"/>
    <property type="match status" value="1"/>
</dbReference>
<dbReference type="PROSITE" id="PS00221">
    <property type="entry name" value="MIP"/>
    <property type="match status" value="1"/>
</dbReference>
<comment type="function">
    <text evidence="3">Water channel required to facilitate the transport of water across cell membrane. May play a role in root water uptake.</text>
</comment>
<comment type="subcellular location">
    <subcellularLocation>
        <location evidence="1">Cell membrane</location>
        <topology evidence="1">Multi-pass membrane protein</topology>
    </subcellularLocation>
</comment>
<comment type="tissue specificity">
    <text evidence="3">Expressed in roots.</text>
</comment>
<comment type="induction">
    <text evidence="3">Circadian-regulation. Expression is higher during the light phase than during the dark phase. Down-regulated by chilling.</text>
</comment>
<comment type="domain">
    <text>Aquaporins contain two tandem repeats each containing three membrane-spanning domains and a pore-forming loop with the signature motif Asn-Pro-Ala (NPA).</text>
</comment>
<comment type="similarity">
    <text evidence="4">Belongs to the MIP/aquaporin (TC 1.A.8) family. PIP (TC 1.A.8.11) subfamily.</text>
</comment>
<gene>
    <name type="primary">PIP2-4</name>
    <name type="ordered locus">Os07g0448100</name>
    <name type="ordered locus">LOC_Os07g26630</name>
    <name type="ORF">OJ1047_A06.105</name>
    <name type="ORF">P0475E07.131</name>
</gene>
<protein>
    <recommendedName>
        <fullName>Aquaporin PIP2-4</fullName>
    </recommendedName>
    <alternativeName>
        <fullName>OsPIP2;4</fullName>
    </alternativeName>
    <alternativeName>
        <fullName>Plasma membrane intrinsic protein 2-4</fullName>
    </alternativeName>
</protein>
<sequence>MGKEVDVSTLEAGGARDYIDPPPAPLVDVDELGKWSLYRALIAEFVATLLFLYVTVATVIGYKHQTDAAVNGADAACGGVGVLGIAWAFGGMIFILVYCTAGVSGGHINPAVTLGLFLARKVSLVRALLYMAAQCLGAICGVALVKGFQSSLYDRYGGGANELAAGYSTGTGLAAEIIGTFVLVYTVFSATDPKRNARDSHVPVLAPLPIGFAVFMVHLATIPITGTGINPARSLGVAVVYNNNKAWSDQWIFWVGPFIGAAIAALYHQVILRASARGYGSFRSNA</sequence>
<proteinExistence type="evidence at transcript level"/>
<evidence type="ECO:0000250" key="1"/>
<evidence type="ECO:0000255" key="2"/>
<evidence type="ECO:0000269" key="3">
    <source>
    </source>
</evidence>
<evidence type="ECO:0000305" key="4"/>
<name>PIP24_ORYSJ</name>
<accession>Q8GRT8</accession>
<accession>B7EL23</accession>
<accession>Q0D6R7</accession>
<keyword id="KW-1003">Cell membrane</keyword>
<keyword id="KW-0472">Membrane</keyword>
<keyword id="KW-1185">Reference proteome</keyword>
<keyword id="KW-0677">Repeat</keyword>
<keyword id="KW-0812">Transmembrane</keyword>
<keyword id="KW-1133">Transmembrane helix</keyword>
<keyword id="KW-0813">Transport</keyword>
<organism>
    <name type="scientific">Oryza sativa subsp. japonica</name>
    <name type="common">Rice</name>
    <dbReference type="NCBI Taxonomy" id="39947"/>
    <lineage>
        <taxon>Eukaryota</taxon>
        <taxon>Viridiplantae</taxon>
        <taxon>Streptophyta</taxon>
        <taxon>Embryophyta</taxon>
        <taxon>Tracheophyta</taxon>
        <taxon>Spermatophyta</taxon>
        <taxon>Magnoliopsida</taxon>
        <taxon>Liliopsida</taxon>
        <taxon>Poales</taxon>
        <taxon>Poaceae</taxon>
        <taxon>BOP clade</taxon>
        <taxon>Oryzoideae</taxon>
        <taxon>Oryzeae</taxon>
        <taxon>Oryzinae</taxon>
        <taxon>Oryza</taxon>
        <taxon>Oryza sativa</taxon>
    </lineage>
</organism>
<reference key="1">
    <citation type="journal article" date="2005" name="Nature">
        <title>The map-based sequence of the rice genome.</title>
        <authorList>
            <consortium name="International rice genome sequencing project (IRGSP)"/>
        </authorList>
    </citation>
    <scope>NUCLEOTIDE SEQUENCE [LARGE SCALE GENOMIC DNA]</scope>
    <source>
        <strain>cv. Nipponbare</strain>
    </source>
</reference>
<reference key="2">
    <citation type="journal article" date="2008" name="Nucleic Acids Res.">
        <title>The rice annotation project database (RAP-DB): 2008 update.</title>
        <authorList>
            <consortium name="The rice annotation project (RAP)"/>
        </authorList>
    </citation>
    <scope>GENOME REANNOTATION</scope>
    <source>
        <strain>cv. Nipponbare</strain>
    </source>
</reference>
<reference key="3">
    <citation type="journal article" date="2013" name="Rice">
        <title>Improvement of the Oryza sativa Nipponbare reference genome using next generation sequence and optical map data.</title>
        <authorList>
            <person name="Kawahara Y."/>
            <person name="de la Bastide M."/>
            <person name="Hamilton J.P."/>
            <person name="Kanamori H."/>
            <person name="McCombie W.R."/>
            <person name="Ouyang S."/>
            <person name="Schwartz D.C."/>
            <person name="Tanaka T."/>
            <person name="Wu J."/>
            <person name="Zhou S."/>
            <person name="Childs K.L."/>
            <person name="Davidson R.M."/>
            <person name="Lin H."/>
            <person name="Quesada-Ocampo L."/>
            <person name="Vaillancourt B."/>
            <person name="Sakai H."/>
            <person name="Lee S.S."/>
            <person name="Kim J."/>
            <person name="Numa H."/>
            <person name="Itoh T."/>
            <person name="Buell C.R."/>
            <person name="Matsumoto T."/>
        </authorList>
    </citation>
    <scope>GENOME REANNOTATION</scope>
    <source>
        <strain>cv. Nipponbare</strain>
    </source>
</reference>
<reference key="4">
    <citation type="journal article" date="2003" name="Science">
        <title>Collection, mapping, and annotation of over 28,000 cDNA clones from japonica rice.</title>
        <authorList>
            <consortium name="The rice full-length cDNA consortium"/>
        </authorList>
    </citation>
    <scope>NUCLEOTIDE SEQUENCE [LARGE SCALE MRNA]</scope>
    <source>
        <strain>cv. Nipponbare</strain>
    </source>
</reference>
<reference key="5">
    <citation type="journal article" date="2005" name="Plant Cell Physiol.">
        <title>Identification of 33 rice aquaporin genes and analysis of their expression and function.</title>
        <authorList>
            <person name="Sakurai J."/>
            <person name="Ishikawa F."/>
            <person name="Yamaguchi T."/>
            <person name="Uemura M."/>
            <person name="Maeshima M."/>
        </authorList>
    </citation>
    <scope>NOMENCLATURE</scope>
    <scope>FUNCTION</scope>
    <scope>TISSUE SPECIFICITY</scope>
    <scope>INDUCTION</scope>
</reference>
<feature type="chain" id="PRO_0000064037" description="Aquaporin PIP2-4">
    <location>
        <begin position="1"/>
        <end position="286"/>
    </location>
</feature>
<feature type="transmembrane region" description="Helical; Name=1" evidence="2">
    <location>
        <begin position="40"/>
        <end position="60"/>
    </location>
</feature>
<feature type="transmembrane region" description="Helical; Name=2" evidence="2">
    <location>
        <begin position="77"/>
        <end position="97"/>
    </location>
</feature>
<feature type="transmembrane region" description="Helical; Name=3" evidence="2">
    <location>
        <begin position="128"/>
        <end position="148"/>
    </location>
</feature>
<feature type="transmembrane region" description="Helical; Name=4" evidence="2">
    <location>
        <begin position="170"/>
        <end position="190"/>
    </location>
</feature>
<feature type="transmembrane region" description="Helical; Name=5" evidence="2">
    <location>
        <begin position="204"/>
        <end position="224"/>
    </location>
</feature>
<feature type="transmembrane region" description="Helical; Name=6" evidence="2">
    <location>
        <begin position="252"/>
        <end position="272"/>
    </location>
</feature>
<feature type="short sequence motif" description="NPA 1">
    <location>
        <begin position="109"/>
        <end position="111"/>
    </location>
</feature>
<feature type="short sequence motif" description="NPA 2">
    <location>
        <begin position="230"/>
        <end position="232"/>
    </location>
</feature>